<comment type="function">
    <text evidence="2 3">Involved in targeting GBSS1 to the starch granule (PubMed:25710501). Was originally thought to be a carbohydrate-binding scaffold protein, but it has been shown that it is mainly found as a soluble protein and that interaction with GBSS1 is a pre-requisite for subsequent starch granule binding (PubMed:19038037, PubMed:25710501). Dissociation from starch as a function of pH, Mg(2+) concentration or redox state is not observed (PubMed:19038037). Interacts primarily with amylopectin and is required for amylose synthesis (PubMed:25710501).</text>
</comment>
<comment type="subunit">
    <text evidence="3">Interacts with GBSS1.</text>
</comment>
<comment type="interaction">
    <interactant intactId="EBI-4430187">
        <id>Q94AX2</id>
    </interactant>
    <interactant intactId="EBI-2355339">
        <id>Q9MAQ0</id>
        <label>GBSS1</label>
    </interactant>
    <organismsDiffer>false</organismsDiffer>
    <experiments>2</experiments>
</comment>
<comment type="interaction">
    <interactant intactId="EBI-4430187">
        <id>Q94AX2</id>
    </interactant>
    <interactant intactId="EBI-4426197">
        <id>Q6NPM7</id>
    </interactant>
    <organismsDiffer>false</organismsDiffer>
    <experiments>2</experiments>
</comment>
<comment type="subcellular location">
    <subcellularLocation>
        <location evidence="2 3">Plastid</location>
        <location evidence="2 3">Chloroplast stroma</location>
    </subcellularLocation>
    <text evidence="3">The vast majority of PTST is soluble and only a small amount is granule-bound. No localization to the starch granules in the absence of GBSS1.</text>
</comment>
<comment type="induction">
    <text evidence="2">Circadian-regulation. Up-regulated during the day (at protein level).</text>
</comment>
<comment type="domain">
    <text evidence="2">Contains a C-terminal (199-277) carbohydrate-binding domain (CBM).</text>
</comment>
<comment type="disruption phenotype">
    <text evidence="3">100-fold reduction of starch-bound GBSS1 protein and production of amylose-free starch.</text>
</comment>
<comment type="sequence caution" evidence="5">
    <conflict type="erroneous gene model prediction">
        <sequence resource="EMBL-CDS" id="AED94476"/>
    </conflict>
</comment>
<gene>
    <name evidence="4" type="primary">PTST</name>
    <name evidence="5" type="synonym">PTST1</name>
    <name evidence="6" type="ordered locus">At5g39790</name>
    <name evidence="7" type="ORF">MKM21.80</name>
</gene>
<keyword id="KW-0150">Chloroplast</keyword>
<keyword id="KW-0175">Coiled coil</keyword>
<keyword id="KW-0934">Plastid</keyword>
<keyword id="KW-1185">Reference proteome</keyword>
<keyword id="KW-0809">Transit peptide</keyword>
<dbReference type="EMBL" id="AB016876">
    <property type="status" value="NOT_ANNOTATED_CDS"/>
    <property type="molecule type" value="Genomic_DNA"/>
</dbReference>
<dbReference type="EMBL" id="CP002688">
    <property type="protein sequence ID" value="AED94476.1"/>
    <property type="status" value="ALT_SEQ"/>
    <property type="molecule type" value="Genomic_DNA"/>
</dbReference>
<dbReference type="EMBL" id="AY045645">
    <property type="protein sequence ID" value="AAK74003.1"/>
    <property type="molecule type" value="mRNA"/>
</dbReference>
<dbReference type="EMBL" id="AY059655">
    <property type="protein sequence ID" value="AAL31148.1"/>
    <property type="molecule type" value="mRNA"/>
</dbReference>
<dbReference type="RefSeq" id="NP_568573.2">
    <property type="nucleotide sequence ID" value="NM_123342.3"/>
</dbReference>
<dbReference type="SMR" id="Q94AX2"/>
<dbReference type="DIP" id="DIP-61406N"/>
<dbReference type="IntAct" id="Q94AX2">
    <property type="interactions" value="4"/>
</dbReference>
<dbReference type="STRING" id="3702.Q94AX2"/>
<dbReference type="PaxDb" id="3702-AT5G39790.1"/>
<dbReference type="DNASU" id="833975"/>
<dbReference type="GeneID" id="833975"/>
<dbReference type="KEGG" id="ath:AT5G39790"/>
<dbReference type="Araport" id="AT5G39790"/>
<dbReference type="TAIR" id="AT5G39790">
    <property type="gene designation" value="PTST"/>
</dbReference>
<dbReference type="eggNOG" id="KOG1616">
    <property type="taxonomic scope" value="Eukaryota"/>
</dbReference>
<dbReference type="InParanoid" id="Q94AX2"/>
<dbReference type="OrthoDB" id="531008at2759"/>
<dbReference type="PhylomeDB" id="Q94AX2"/>
<dbReference type="PRO" id="PR:Q94AX2"/>
<dbReference type="Proteomes" id="UP000006548">
    <property type="component" value="Chromosome 5"/>
</dbReference>
<dbReference type="ExpressionAtlas" id="Q94AX2">
    <property type="expression patterns" value="baseline and differential"/>
</dbReference>
<dbReference type="GO" id="GO:0009507">
    <property type="term" value="C:chloroplast"/>
    <property type="evidence" value="ECO:0000314"/>
    <property type="project" value="TAIR"/>
</dbReference>
<dbReference type="GO" id="GO:0009569">
    <property type="term" value="C:chloroplast starch grain"/>
    <property type="evidence" value="ECO:0000314"/>
    <property type="project" value="UniProtKB"/>
</dbReference>
<dbReference type="GO" id="GO:0009570">
    <property type="term" value="C:chloroplast stroma"/>
    <property type="evidence" value="ECO:0000314"/>
    <property type="project" value="UniProtKB"/>
</dbReference>
<dbReference type="GO" id="GO:0030247">
    <property type="term" value="F:polysaccharide binding"/>
    <property type="evidence" value="ECO:0000314"/>
    <property type="project" value="TAIR"/>
</dbReference>
<dbReference type="GO" id="GO:2001070">
    <property type="term" value="F:starch binding"/>
    <property type="evidence" value="ECO:0000314"/>
    <property type="project" value="UniProtKB"/>
</dbReference>
<dbReference type="GO" id="GO:0010581">
    <property type="term" value="P:regulation of starch biosynthetic process"/>
    <property type="evidence" value="ECO:0000315"/>
    <property type="project" value="UniProtKB"/>
</dbReference>
<dbReference type="GO" id="GO:0019252">
    <property type="term" value="P:starch biosynthetic process"/>
    <property type="evidence" value="ECO:0000316"/>
    <property type="project" value="TAIR"/>
</dbReference>
<dbReference type="CDD" id="cd02859">
    <property type="entry name" value="E_set_AMPKbeta_like_N"/>
    <property type="match status" value="1"/>
</dbReference>
<dbReference type="FunFam" id="2.60.40.10:FF:001513">
    <property type="entry name" value="Protein PTST, chloroplastic"/>
    <property type="match status" value="1"/>
</dbReference>
<dbReference type="Gene3D" id="2.60.40.10">
    <property type="entry name" value="Immunoglobulins"/>
    <property type="match status" value="1"/>
</dbReference>
<dbReference type="InterPro" id="IPR032640">
    <property type="entry name" value="AMPK1_CBM"/>
</dbReference>
<dbReference type="InterPro" id="IPR013783">
    <property type="entry name" value="Ig-like_fold"/>
</dbReference>
<dbReference type="InterPro" id="IPR014756">
    <property type="entry name" value="Ig_E-set"/>
</dbReference>
<dbReference type="PANTHER" id="PTHR47342">
    <property type="entry name" value="PROTEIN PTST, CHLOROPLASTIC"/>
    <property type="match status" value="1"/>
</dbReference>
<dbReference type="PANTHER" id="PTHR47342:SF1">
    <property type="entry name" value="PROTEIN PTST, CHLOROPLASTIC"/>
    <property type="match status" value="1"/>
</dbReference>
<dbReference type="Pfam" id="PF16561">
    <property type="entry name" value="AMPK1_CBM"/>
    <property type="match status" value="1"/>
</dbReference>
<dbReference type="SUPFAM" id="SSF81296">
    <property type="entry name" value="E set domains"/>
    <property type="match status" value="1"/>
</dbReference>
<protein>
    <recommendedName>
        <fullName evidence="4">Protein PTST, chloroplastic</fullName>
    </recommendedName>
    <alternativeName>
        <fullName evidence="4">PROTEIN TARGETING TO STARCH</fullName>
    </alternativeName>
</protein>
<feature type="transit peptide" description="Chloroplast" evidence="1">
    <location>
        <begin position="1"/>
        <end position="44"/>
    </location>
</feature>
<feature type="chain" id="PRO_0000432836" description="Protein PTST, chloroplastic">
    <location>
        <begin position="45"/>
        <end position="277"/>
    </location>
</feature>
<feature type="coiled-coil region" evidence="1">
    <location>
        <begin position="95"/>
        <end position="152"/>
    </location>
</feature>
<feature type="mutagenesis site" description="Loss of binding to starch; when associated with A-255." evidence="3">
    <original>W</original>
    <variation>A</variation>
    <location>
        <position position="217"/>
    </location>
</feature>
<feature type="mutagenesis site" description="Loss of binding to starch; when associated with A-217." evidence="3">
    <original>W</original>
    <variation>A</variation>
    <location>
        <position position="255"/>
    </location>
</feature>
<sequence>MGCVPRIEFGCSSQSLTLSWNLRAWNLCRLNTISHFQKLPYPLVASTRKHYKNSLLLKRFLVGVGTEESSLSEDLLDESLSRPLTSDELKSLLIDTERSKLVKKLSEANQQNRFLKRQLKTQEHEITNIKTELALMELEVQALVKLAEEIANLGIPQGSRKISGKYIQSHLLSRLDAVQKKMKEQIKGVEAAQSKEVHVFWIGMAESVQVMGSFDGWSQREDLSPEYSALFTKFSTTLFLRPGRYEMKFLVDGEWQISPEFPTSGEGLMENNVLVVE</sequence>
<evidence type="ECO:0000255" key="1"/>
<evidence type="ECO:0000269" key="2">
    <source>
    </source>
</evidence>
<evidence type="ECO:0000269" key="3">
    <source>
    </source>
</evidence>
<evidence type="ECO:0000303" key="4">
    <source>
    </source>
</evidence>
<evidence type="ECO:0000305" key="5"/>
<evidence type="ECO:0000312" key="6">
    <source>
        <dbReference type="Araport" id="AT5G39790"/>
    </source>
</evidence>
<evidence type="ECO:0000312" key="7">
    <source>
        <dbReference type="EMBL" id="AB016876"/>
    </source>
</evidence>
<name>PTST_ARATH</name>
<organism>
    <name type="scientific">Arabidopsis thaliana</name>
    <name type="common">Mouse-ear cress</name>
    <dbReference type="NCBI Taxonomy" id="3702"/>
    <lineage>
        <taxon>Eukaryota</taxon>
        <taxon>Viridiplantae</taxon>
        <taxon>Streptophyta</taxon>
        <taxon>Embryophyta</taxon>
        <taxon>Tracheophyta</taxon>
        <taxon>Spermatophyta</taxon>
        <taxon>Magnoliopsida</taxon>
        <taxon>eudicotyledons</taxon>
        <taxon>Gunneridae</taxon>
        <taxon>Pentapetalae</taxon>
        <taxon>rosids</taxon>
        <taxon>malvids</taxon>
        <taxon>Brassicales</taxon>
        <taxon>Brassicaceae</taxon>
        <taxon>Camelineae</taxon>
        <taxon>Arabidopsis</taxon>
    </lineage>
</organism>
<accession>Q94AX2</accession>
<accession>F4KFV1</accession>
<proteinExistence type="evidence at protein level"/>
<reference key="1">
    <citation type="journal article" date="1998" name="DNA Res.">
        <title>Structural analysis of Arabidopsis thaliana chromosome 5. VII. Sequence features of the regions of 1,013,767 bp covered by sixteen physically assigned P1 and TAC clones.</title>
        <authorList>
            <person name="Nakamura Y."/>
            <person name="Sato S."/>
            <person name="Asamizu E."/>
            <person name="Kaneko T."/>
            <person name="Kotani H."/>
            <person name="Miyajima N."/>
            <person name="Tabata S."/>
        </authorList>
    </citation>
    <scope>NUCLEOTIDE SEQUENCE [LARGE SCALE GENOMIC DNA]</scope>
    <source>
        <strain>cv. Columbia</strain>
    </source>
</reference>
<reference key="2">
    <citation type="journal article" date="2017" name="Plant J.">
        <title>Araport11: a complete reannotation of the Arabidopsis thaliana reference genome.</title>
        <authorList>
            <person name="Cheng C.Y."/>
            <person name="Krishnakumar V."/>
            <person name="Chan A.P."/>
            <person name="Thibaud-Nissen F."/>
            <person name="Schobel S."/>
            <person name="Town C.D."/>
        </authorList>
    </citation>
    <scope>GENOME REANNOTATION</scope>
    <source>
        <strain>cv. Columbia</strain>
    </source>
</reference>
<reference key="3">
    <citation type="journal article" date="2003" name="Science">
        <title>Empirical analysis of transcriptional activity in the Arabidopsis genome.</title>
        <authorList>
            <person name="Yamada K."/>
            <person name="Lim J."/>
            <person name="Dale J.M."/>
            <person name="Chen H."/>
            <person name="Shinn P."/>
            <person name="Palm C.J."/>
            <person name="Southwick A.M."/>
            <person name="Wu H.C."/>
            <person name="Kim C.J."/>
            <person name="Nguyen M."/>
            <person name="Pham P.K."/>
            <person name="Cheuk R.F."/>
            <person name="Karlin-Newmann G."/>
            <person name="Liu S.X."/>
            <person name="Lam B."/>
            <person name="Sakano H."/>
            <person name="Wu T."/>
            <person name="Yu G."/>
            <person name="Miranda M."/>
            <person name="Quach H.L."/>
            <person name="Tripp M."/>
            <person name="Chang C.H."/>
            <person name="Lee J.M."/>
            <person name="Toriumi M.J."/>
            <person name="Chan M.M."/>
            <person name="Tang C.C."/>
            <person name="Onodera C.S."/>
            <person name="Deng J.M."/>
            <person name="Akiyama K."/>
            <person name="Ansari Y."/>
            <person name="Arakawa T."/>
            <person name="Banh J."/>
            <person name="Banno F."/>
            <person name="Bowser L."/>
            <person name="Brooks S.Y."/>
            <person name="Carninci P."/>
            <person name="Chao Q."/>
            <person name="Choy N."/>
            <person name="Enju A."/>
            <person name="Goldsmith A.D."/>
            <person name="Gurjal M."/>
            <person name="Hansen N.F."/>
            <person name="Hayashizaki Y."/>
            <person name="Johnson-Hopson C."/>
            <person name="Hsuan V.W."/>
            <person name="Iida K."/>
            <person name="Karnes M."/>
            <person name="Khan S."/>
            <person name="Koesema E."/>
            <person name="Ishida J."/>
            <person name="Jiang P.X."/>
            <person name="Jones T."/>
            <person name="Kawai J."/>
            <person name="Kamiya A."/>
            <person name="Meyers C."/>
            <person name="Nakajima M."/>
            <person name="Narusaka M."/>
            <person name="Seki M."/>
            <person name="Sakurai T."/>
            <person name="Satou M."/>
            <person name="Tamse R."/>
            <person name="Vaysberg M."/>
            <person name="Wallender E.K."/>
            <person name="Wong C."/>
            <person name="Yamamura Y."/>
            <person name="Yuan S."/>
            <person name="Shinozaki K."/>
            <person name="Davis R.W."/>
            <person name="Theologis A."/>
            <person name="Ecker J.R."/>
        </authorList>
    </citation>
    <scope>NUCLEOTIDE SEQUENCE [LARGE SCALE MRNA]</scope>
    <source>
        <strain>cv. Columbia</strain>
    </source>
</reference>
<reference key="4">
    <citation type="journal article" date="2008" name="BMC Plant Biol.">
        <title>Arabidopsis At5g39790 encodes a chloroplast-localized, carbohydrate-binding, coiled-coil domain-containing putative scaffold protein.</title>
        <authorList>
            <person name="Lohmeier-Vogel E.M."/>
            <person name="Kerk D."/>
            <person name="Nimick M."/>
            <person name="Wrobel S."/>
            <person name="Vickerman L."/>
            <person name="Muench D.G."/>
            <person name="Moorhead G.B."/>
        </authorList>
    </citation>
    <scope>FUNCTION</scope>
    <scope>DOMAIN</scope>
    <scope>INDUCTION BY LIGHT</scope>
    <scope>SUBCELLULAR LOCATION</scope>
</reference>
<reference key="5">
    <citation type="journal article" date="2015" name="PLoS Biol.">
        <title>PROTEIN TARGETING TO STARCH is required for localising GRANULE-BOUND STARCH SYNTHASE to starch granules and for normal amylose synthesis in Arabidopsis.</title>
        <authorList>
            <person name="Seung D."/>
            <person name="Soyk S."/>
            <person name="Coiro M."/>
            <person name="Maier B.A."/>
            <person name="Eicke S."/>
            <person name="Zeeman S.C."/>
        </authorList>
    </citation>
    <scope>FUNCTION</scope>
    <scope>DISRUPTION PHENOTYPE</scope>
    <scope>SUBCELLULAR LOCATION</scope>
    <scope>MUTAGENESIS OF TRP-217 AND TRP-255</scope>
    <scope>INTERACTION WITH GBSS1</scope>
    <source>
        <strain>cv. Columbia</strain>
    </source>
</reference>